<accession>Q8R2N0</accession>
<accession>Q8BZ86</accession>
<accession>Q9CR69</accession>
<accession>Q9CV91</accession>
<proteinExistence type="evidence at transcript level"/>
<organism>
    <name type="scientific">Mus musculus</name>
    <name type="common">Mouse</name>
    <dbReference type="NCBI Taxonomy" id="10090"/>
    <lineage>
        <taxon>Eukaryota</taxon>
        <taxon>Metazoa</taxon>
        <taxon>Chordata</taxon>
        <taxon>Craniata</taxon>
        <taxon>Vertebrata</taxon>
        <taxon>Euteleostomi</taxon>
        <taxon>Mammalia</taxon>
        <taxon>Eutheria</taxon>
        <taxon>Euarchontoglires</taxon>
        <taxon>Glires</taxon>
        <taxon>Rodentia</taxon>
        <taxon>Myomorpha</taxon>
        <taxon>Muroidea</taxon>
        <taxon>Muridae</taxon>
        <taxon>Murinae</taxon>
        <taxon>Mus</taxon>
        <taxon>Mus</taxon>
    </lineage>
</organism>
<evidence type="ECO:0000250" key="1"/>
<evidence type="ECO:0000256" key="2">
    <source>
        <dbReference type="SAM" id="MobiDB-lite"/>
    </source>
</evidence>
<evidence type="ECO:0000303" key="3">
    <source>
    </source>
</evidence>
<evidence type="ECO:0000305" key="4"/>
<name>TAP26_MOUSE</name>
<dbReference type="EMBL" id="AK009028">
    <property type="protein sequence ID" value="BAB26036.1"/>
    <property type="molecule type" value="mRNA"/>
</dbReference>
<dbReference type="EMBL" id="AK012917">
    <property type="protein sequence ID" value="BAB28548.1"/>
    <property type="molecule type" value="mRNA"/>
</dbReference>
<dbReference type="EMBL" id="AK019970">
    <property type="protein sequence ID" value="BAB31941.1"/>
    <property type="molecule type" value="mRNA"/>
</dbReference>
<dbReference type="EMBL" id="AK036330">
    <property type="protein sequence ID" value="BAC29386.1"/>
    <property type="molecule type" value="mRNA"/>
</dbReference>
<dbReference type="EMBL" id="AK135550">
    <property type="protein sequence ID" value="BAE22578.1"/>
    <property type="molecule type" value="mRNA"/>
</dbReference>
<dbReference type="EMBL" id="BC027401">
    <property type="protein sequence ID" value="AAH27401.1"/>
    <property type="molecule type" value="mRNA"/>
</dbReference>
<dbReference type="CCDS" id="CCDS24158.1">
    <molecule id="Q8R2N0-1"/>
</dbReference>
<dbReference type="RefSeq" id="NP_079878.1">
    <molecule id="Q8R2N0-1"/>
    <property type="nucleotide sequence ID" value="NM_025602.3"/>
</dbReference>
<dbReference type="SMR" id="Q8R2N0"/>
<dbReference type="BioGRID" id="206751">
    <property type="interactions" value="5"/>
</dbReference>
<dbReference type="FunCoup" id="Q8R2N0">
    <property type="interactions" value="2070"/>
</dbReference>
<dbReference type="STRING" id="10090.ENSMUSP00000020049"/>
<dbReference type="PhosphoSitePlus" id="Q8R2N0"/>
<dbReference type="PaxDb" id="10090-ENSMUSP00000020049"/>
<dbReference type="PeptideAtlas" id="Q8R2N0"/>
<dbReference type="ProteomicsDB" id="263125">
    <molecule id="Q8R2N0-1"/>
</dbReference>
<dbReference type="ProteomicsDB" id="263126">
    <molecule id="Q8R2N0-2"/>
</dbReference>
<dbReference type="Pumba" id="Q8R2N0"/>
<dbReference type="Antibodypedia" id="29834">
    <property type="antibodies" value="66 antibodies from 17 providers"/>
</dbReference>
<dbReference type="Ensembl" id="ENSMUST00000020049.9">
    <molecule id="Q8R2N0-1"/>
    <property type="protein sequence ID" value="ENSMUSP00000020049.9"/>
    <property type="gene ID" value="ENSMUSG00000019897.9"/>
</dbReference>
<dbReference type="GeneID" id="52713"/>
<dbReference type="KEGG" id="mmu:52713"/>
<dbReference type="UCSC" id="uc007gyp.1">
    <molecule id="Q8R2N0-1"/>
    <property type="organism name" value="mouse"/>
</dbReference>
<dbReference type="AGR" id="MGI:1289302"/>
<dbReference type="CTD" id="29080"/>
<dbReference type="MGI" id="MGI:1289302">
    <property type="gene designation" value="Ccdc59"/>
</dbReference>
<dbReference type="VEuPathDB" id="HostDB:ENSMUSG00000019897"/>
<dbReference type="eggNOG" id="KOG3777">
    <property type="taxonomic scope" value="Eukaryota"/>
</dbReference>
<dbReference type="eggNOG" id="KOG4819">
    <property type="taxonomic scope" value="Eukaryota"/>
</dbReference>
<dbReference type="GeneTree" id="ENSGT00390000006546"/>
<dbReference type="HOGENOM" id="CLU_101023_0_0_1"/>
<dbReference type="InParanoid" id="Q8R2N0"/>
<dbReference type="OMA" id="TDRYPDH"/>
<dbReference type="OrthoDB" id="5377144at2759"/>
<dbReference type="PhylomeDB" id="Q8R2N0"/>
<dbReference type="TreeFam" id="TF324429"/>
<dbReference type="Reactome" id="R-MMU-5683826">
    <property type="pathway name" value="Surfactant metabolism"/>
</dbReference>
<dbReference type="BioGRID-ORCS" id="52713">
    <property type="hits" value="10 hits in 81 CRISPR screens"/>
</dbReference>
<dbReference type="PRO" id="PR:Q8R2N0"/>
<dbReference type="Proteomes" id="UP000000589">
    <property type="component" value="Chromosome 10"/>
</dbReference>
<dbReference type="RNAct" id="Q8R2N0">
    <property type="molecule type" value="protein"/>
</dbReference>
<dbReference type="Bgee" id="ENSMUSG00000019897">
    <property type="expression patterns" value="Expressed in epithelium of small intestine and 253 other cell types or tissues"/>
</dbReference>
<dbReference type="GO" id="GO:0005634">
    <property type="term" value="C:nucleus"/>
    <property type="evidence" value="ECO:0007669"/>
    <property type="project" value="UniProtKB-SubCell"/>
</dbReference>
<dbReference type="InterPro" id="IPR013730">
    <property type="entry name" value="Fyv7/TAP26"/>
</dbReference>
<dbReference type="PANTHER" id="PTHR15657">
    <property type="entry name" value="THYROID TRANSCRIPTION FACTOR 1-ASSOCIATED PROTEIN 26"/>
    <property type="match status" value="1"/>
</dbReference>
<dbReference type="PANTHER" id="PTHR15657:SF1">
    <property type="entry name" value="THYROID TRANSCRIPTION FACTOR 1-ASSOCIATED PROTEIN 26"/>
    <property type="match status" value="1"/>
</dbReference>
<dbReference type="Pfam" id="PF08524">
    <property type="entry name" value="rRNA_processing"/>
    <property type="match status" value="1"/>
</dbReference>
<dbReference type="PRINTS" id="PR01854">
    <property type="entry name" value="BR22PROTEIN"/>
</dbReference>
<gene>
    <name type="primary">Ccdc59</name>
    <name type="synonym">D10Ertd718e</name>
    <name type="synonym">Tap26</name>
</gene>
<sequence length="240" mass="28034">MAPSRPSSKWRTGGFAARGEGISQVRFGNQNGKRRTWRPNPQQAFRGSVRKGQGFAFRRKLKIQQNYKKLLWKVKEAPASQESQFTDRYPEHLKHLYLAEEERLRKQQRKAGLALSEEQVDRPLPEEEGSTEQTSSEEPPGGHQPQPEELNTGSSVTFPKNKKKKTSNQKAQEEYERVQAKRAAKKFEFEMRKQEREEAQRLYKKKKMEAFKILSKKTKKGQPNLNLQMEYLLQKIQENS</sequence>
<protein>
    <recommendedName>
        <fullName>Thyroid transcription factor 1-associated protein 26</fullName>
        <shortName>TTF-1-associated protein 26</shortName>
    </recommendedName>
    <alternativeName>
        <fullName>Coiled-coil domain-containing protein 59</fullName>
    </alternativeName>
</protein>
<reference key="1">
    <citation type="journal article" date="2005" name="Science">
        <title>The transcriptional landscape of the mammalian genome.</title>
        <authorList>
            <person name="Carninci P."/>
            <person name="Kasukawa T."/>
            <person name="Katayama S."/>
            <person name="Gough J."/>
            <person name="Frith M.C."/>
            <person name="Maeda N."/>
            <person name="Oyama R."/>
            <person name="Ravasi T."/>
            <person name="Lenhard B."/>
            <person name="Wells C."/>
            <person name="Kodzius R."/>
            <person name="Shimokawa K."/>
            <person name="Bajic V.B."/>
            <person name="Brenner S.E."/>
            <person name="Batalov S."/>
            <person name="Forrest A.R."/>
            <person name="Zavolan M."/>
            <person name="Davis M.J."/>
            <person name="Wilming L.G."/>
            <person name="Aidinis V."/>
            <person name="Allen J.E."/>
            <person name="Ambesi-Impiombato A."/>
            <person name="Apweiler R."/>
            <person name="Aturaliya R.N."/>
            <person name="Bailey T.L."/>
            <person name="Bansal M."/>
            <person name="Baxter L."/>
            <person name="Beisel K.W."/>
            <person name="Bersano T."/>
            <person name="Bono H."/>
            <person name="Chalk A.M."/>
            <person name="Chiu K.P."/>
            <person name="Choudhary V."/>
            <person name="Christoffels A."/>
            <person name="Clutterbuck D.R."/>
            <person name="Crowe M.L."/>
            <person name="Dalla E."/>
            <person name="Dalrymple B.P."/>
            <person name="de Bono B."/>
            <person name="Della Gatta G."/>
            <person name="di Bernardo D."/>
            <person name="Down T."/>
            <person name="Engstrom P."/>
            <person name="Fagiolini M."/>
            <person name="Faulkner G."/>
            <person name="Fletcher C.F."/>
            <person name="Fukushima T."/>
            <person name="Furuno M."/>
            <person name="Futaki S."/>
            <person name="Gariboldi M."/>
            <person name="Georgii-Hemming P."/>
            <person name="Gingeras T.R."/>
            <person name="Gojobori T."/>
            <person name="Green R.E."/>
            <person name="Gustincich S."/>
            <person name="Harbers M."/>
            <person name="Hayashi Y."/>
            <person name="Hensch T.K."/>
            <person name="Hirokawa N."/>
            <person name="Hill D."/>
            <person name="Huminiecki L."/>
            <person name="Iacono M."/>
            <person name="Ikeo K."/>
            <person name="Iwama A."/>
            <person name="Ishikawa T."/>
            <person name="Jakt M."/>
            <person name="Kanapin A."/>
            <person name="Katoh M."/>
            <person name="Kawasawa Y."/>
            <person name="Kelso J."/>
            <person name="Kitamura H."/>
            <person name="Kitano H."/>
            <person name="Kollias G."/>
            <person name="Krishnan S.P."/>
            <person name="Kruger A."/>
            <person name="Kummerfeld S.K."/>
            <person name="Kurochkin I.V."/>
            <person name="Lareau L.F."/>
            <person name="Lazarevic D."/>
            <person name="Lipovich L."/>
            <person name="Liu J."/>
            <person name="Liuni S."/>
            <person name="McWilliam S."/>
            <person name="Madan Babu M."/>
            <person name="Madera M."/>
            <person name="Marchionni L."/>
            <person name="Matsuda H."/>
            <person name="Matsuzawa S."/>
            <person name="Miki H."/>
            <person name="Mignone F."/>
            <person name="Miyake S."/>
            <person name="Morris K."/>
            <person name="Mottagui-Tabar S."/>
            <person name="Mulder N."/>
            <person name="Nakano N."/>
            <person name="Nakauchi H."/>
            <person name="Ng P."/>
            <person name="Nilsson R."/>
            <person name="Nishiguchi S."/>
            <person name="Nishikawa S."/>
            <person name="Nori F."/>
            <person name="Ohara O."/>
            <person name="Okazaki Y."/>
            <person name="Orlando V."/>
            <person name="Pang K.C."/>
            <person name="Pavan W.J."/>
            <person name="Pavesi G."/>
            <person name="Pesole G."/>
            <person name="Petrovsky N."/>
            <person name="Piazza S."/>
            <person name="Reed J."/>
            <person name="Reid J.F."/>
            <person name="Ring B.Z."/>
            <person name="Ringwald M."/>
            <person name="Rost B."/>
            <person name="Ruan Y."/>
            <person name="Salzberg S.L."/>
            <person name="Sandelin A."/>
            <person name="Schneider C."/>
            <person name="Schoenbach C."/>
            <person name="Sekiguchi K."/>
            <person name="Semple C.A."/>
            <person name="Seno S."/>
            <person name="Sessa L."/>
            <person name="Sheng Y."/>
            <person name="Shibata Y."/>
            <person name="Shimada H."/>
            <person name="Shimada K."/>
            <person name="Silva D."/>
            <person name="Sinclair B."/>
            <person name="Sperling S."/>
            <person name="Stupka E."/>
            <person name="Sugiura K."/>
            <person name="Sultana R."/>
            <person name="Takenaka Y."/>
            <person name="Taki K."/>
            <person name="Tammoja K."/>
            <person name="Tan S.L."/>
            <person name="Tang S."/>
            <person name="Taylor M.S."/>
            <person name="Tegner J."/>
            <person name="Teichmann S.A."/>
            <person name="Ueda H.R."/>
            <person name="van Nimwegen E."/>
            <person name="Verardo R."/>
            <person name="Wei C.L."/>
            <person name="Yagi K."/>
            <person name="Yamanishi H."/>
            <person name="Zabarovsky E."/>
            <person name="Zhu S."/>
            <person name="Zimmer A."/>
            <person name="Hide W."/>
            <person name="Bult C."/>
            <person name="Grimmond S.M."/>
            <person name="Teasdale R.D."/>
            <person name="Liu E.T."/>
            <person name="Brusic V."/>
            <person name="Quackenbush J."/>
            <person name="Wahlestedt C."/>
            <person name="Mattick J.S."/>
            <person name="Hume D.A."/>
            <person name="Kai C."/>
            <person name="Sasaki D."/>
            <person name="Tomaru Y."/>
            <person name="Fukuda S."/>
            <person name="Kanamori-Katayama M."/>
            <person name="Suzuki M."/>
            <person name="Aoki J."/>
            <person name="Arakawa T."/>
            <person name="Iida J."/>
            <person name="Imamura K."/>
            <person name="Itoh M."/>
            <person name="Kato T."/>
            <person name="Kawaji H."/>
            <person name="Kawagashira N."/>
            <person name="Kawashima T."/>
            <person name="Kojima M."/>
            <person name="Kondo S."/>
            <person name="Konno H."/>
            <person name="Nakano K."/>
            <person name="Ninomiya N."/>
            <person name="Nishio T."/>
            <person name="Okada M."/>
            <person name="Plessy C."/>
            <person name="Shibata K."/>
            <person name="Shiraki T."/>
            <person name="Suzuki S."/>
            <person name="Tagami M."/>
            <person name="Waki K."/>
            <person name="Watahiki A."/>
            <person name="Okamura-Oho Y."/>
            <person name="Suzuki H."/>
            <person name="Kawai J."/>
            <person name="Hayashizaki Y."/>
        </authorList>
    </citation>
    <scope>NUCLEOTIDE SEQUENCE [LARGE SCALE MRNA] (ISOFORMS 1 AND 2)</scope>
    <source>
        <strain>C57BL/6J</strain>
        <tissue>Cerebellum</tissue>
        <tissue>Muellerian duct</tissue>
        <tissue>Tongue</tissue>
    </source>
</reference>
<reference key="2">
    <citation type="journal article" date="2004" name="Genome Res.">
        <title>The status, quality, and expansion of the NIH full-length cDNA project: the Mammalian Gene Collection (MGC).</title>
        <authorList>
            <consortium name="The MGC Project Team"/>
        </authorList>
    </citation>
    <scope>NUCLEOTIDE SEQUENCE [LARGE SCALE MRNA] (ISOFORM 1)</scope>
    <source>
        <strain>FVB/N</strain>
        <tissue>Mammary tumor</tissue>
    </source>
</reference>
<comment type="function">
    <text evidence="1">Component of the transcription complexes of the pulmonary surfactant-associated protein-B (SFTPB) and -C (SFTPC). Enhances homeobox protein Nkx-2.1-activated SFTPB and SFTPC promoter activities (By similarity).</text>
</comment>
<comment type="subunit">
    <text evidence="1">Interacts with NKX2-1.</text>
</comment>
<comment type="subcellular location">
    <subcellularLocation>
        <location evidence="1">Nucleus</location>
    </subcellularLocation>
</comment>
<comment type="alternative products">
    <event type="alternative splicing"/>
    <isoform>
        <id>Q8R2N0-1</id>
        <name>1</name>
        <sequence type="displayed"/>
    </isoform>
    <isoform>
        <id>Q8R2N0-2</id>
        <name>2</name>
        <sequence type="described" ref="VSP_027489 VSP_027490"/>
    </isoform>
</comment>
<comment type="similarity">
    <text evidence="4">Belongs to the TAP26 family.</text>
</comment>
<feature type="chain" id="PRO_0000298942" description="Thyroid transcription factor 1-associated protein 26">
    <location>
        <begin position="1"/>
        <end position="240"/>
    </location>
</feature>
<feature type="region of interest" description="Disordered" evidence="2">
    <location>
        <begin position="104"/>
        <end position="181"/>
    </location>
</feature>
<feature type="compositionally biased region" description="Low complexity" evidence="2">
    <location>
        <begin position="131"/>
        <end position="149"/>
    </location>
</feature>
<feature type="compositionally biased region" description="Basic and acidic residues" evidence="2">
    <location>
        <begin position="171"/>
        <end position="181"/>
    </location>
</feature>
<feature type="splice variant" id="VSP_027489" description="In isoform 2." evidence="3">
    <original>S</original>
    <variation>R</variation>
    <location>
        <position position="154"/>
    </location>
</feature>
<feature type="splice variant" id="VSP_027490" description="In isoform 2." evidence="3">
    <location>
        <begin position="155"/>
        <end position="240"/>
    </location>
</feature>
<feature type="sequence conflict" description="In Ref. 2; AAH27401." evidence="4" ref="2">
    <original>R</original>
    <variation>S</variation>
    <location>
        <position position="105"/>
    </location>
</feature>
<feature type="sequence conflict" description="In Ref. 2; AAH27401." evidence="4" ref="2">
    <location>
        <position position="118"/>
    </location>
</feature>
<keyword id="KW-0025">Alternative splicing</keyword>
<keyword id="KW-0539">Nucleus</keyword>
<keyword id="KW-1185">Reference proteome</keyword>
<keyword id="KW-0804">Transcription</keyword>
<keyword id="KW-0805">Transcription regulation</keyword>